<keyword id="KW-0002">3D-structure</keyword>
<keyword id="KW-0007">Acetylation</keyword>
<keyword id="KW-0106">Calcium</keyword>
<keyword id="KW-0963">Cytoplasm</keyword>
<keyword id="KW-0903">Direct protein sequencing</keyword>
<keyword id="KW-0479">Metal-binding</keyword>
<keyword id="KW-0488">Methylation</keyword>
<keyword id="KW-0514">Muscle protein</keyword>
<keyword id="KW-0677">Repeat</keyword>
<evidence type="ECO:0000255" key="1">
    <source>
        <dbReference type="PROSITE-ProRule" id="PRU00448"/>
    </source>
</evidence>
<evidence type="ECO:0000269" key="2">
    <source>
    </source>
</evidence>
<evidence type="ECO:0000305" key="3">
    <source>
    </source>
</evidence>
<evidence type="ECO:0007829" key="4">
    <source>
        <dbReference type="PDB" id="1C7V"/>
    </source>
</evidence>
<evidence type="ECO:0007829" key="5">
    <source>
        <dbReference type="PDB" id="1J7Q"/>
    </source>
</evidence>
<evidence type="ECO:0007829" key="6">
    <source>
        <dbReference type="PDB" id="1J7R"/>
    </source>
</evidence>
<organism>
    <name type="scientific">Branchiostoma lanceolatum</name>
    <name type="common">Common lancelet</name>
    <name type="synonym">Amphioxus lanceolatum</name>
    <dbReference type="NCBI Taxonomy" id="7740"/>
    <lineage>
        <taxon>Eukaryota</taxon>
        <taxon>Metazoa</taxon>
        <taxon>Chordata</taxon>
        <taxon>Cephalochordata</taxon>
        <taxon>Leptocardii</taxon>
        <taxon>Amphioxiformes</taxon>
        <taxon>Branchiostomatidae</taxon>
        <taxon>Branchiostoma</taxon>
    </lineage>
</organism>
<reference key="1">
    <citation type="journal article" date="1999" name="J. Biochem.">
        <title>Genomic structure of the amphioxus calcium vector protein.</title>
        <authorList>
            <person name="Yuasa H.J."/>
            <person name="Cox J.A."/>
            <person name="Takagi T."/>
        </authorList>
    </citation>
    <scope>NUCLEOTIDE SEQUENCE [MRNA]</scope>
    <scope>SEQUENCE REVISION TO 154-155</scope>
</reference>
<reference key="2">
    <citation type="journal article" date="1987" name="J. Biol. Chem.">
        <title>The primary structure of a new Mr 18,000 calcium vector protein from amphioxus.</title>
        <authorList>
            <person name="Kobayashi T."/>
            <person name="Takagi T."/>
            <person name="Konishi K."/>
            <person name="Cox J.A."/>
        </authorList>
    </citation>
    <scope>PROTEIN SEQUENCE OF 2-162</scope>
    <scope>ACETYLATION AT ALA-2</scope>
    <scope>METHYLATION AT LYS-96 AND LYS-117</scope>
</reference>
<reference key="3">
    <citation type="journal article" date="2000" name="Biochemistry">
        <title>Sequential calcium binding to the regulatory domain of calcium vector protein reveals functional asymmetry and a novel mode of structural rearrangement.</title>
        <authorList>
            <person name="Theret I."/>
            <person name="Baladi S."/>
            <person name="Cox J.A."/>
            <person name="Sakamoto H."/>
            <person name="Craescu C.T."/>
        </authorList>
    </citation>
    <scope>STRUCTURE BY NMR OF 82-161</scope>
    <scope>CALCIUM-BINDING</scope>
</reference>
<reference key="4">
    <citation type="journal article" date="2001" name="Biochemistry">
        <title>Solution structure and backbone dynamics of the defunct domain of calcium vector protein.</title>
        <authorList>
            <person name="Theret I."/>
            <person name="Baladi S."/>
            <person name="Cox J.A."/>
            <person name="Gallay J."/>
            <person name="Sakamoto H."/>
            <person name="Craescu C.T."/>
        </authorList>
    </citation>
    <scope>STRUCTURE BY NMR OF 2-86</scope>
    <scope>ABSENCE OF CALCIUM-BINDING</scope>
    <scope>ABSENCE OF DISULFIDE BOND</scope>
</reference>
<comment type="function">
    <text>The exact function of this protein is not yet known. It interacts with CAVPT, a protein also of unknown function, in a calcium-dependent way. This protein binds two calcium ions.</text>
</comment>
<comment type="subcellular location">
    <subcellularLocation>
        <location>Cytoplasm</location>
    </subcellularLocation>
</comment>
<comment type="caution">
    <text evidence="3">Was originally thought to have an internal disulfide bond.</text>
</comment>
<proteinExistence type="evidence at protein level"/>
<name>CAVP_BRALA</name>
<protein>
    <recommendedName>
        <fullName>Calcium vector protein</fullName>
        <shortName>CAVP</shortName>
    </recommendedName>
</protein>
<dbReference type="EMBL" id="AB001688">
    <property type="protein sequence ID" value="BAA19428.1"/>
    <property type="molecule type" value="mRNA"/>
</dbReference>
<dbReference type="PIR" id="A29557">
    <property type="entry name" value="A29557"/>
</dbReference>
<dbReference type="PIR" id="JC7157">
    <property type="entry name" value="JC7157"/>
</dbReference>
<dbReference type="RefSeq" id="XP_066263315.1">
    <property type="nucleotide sequence ID" value="XM_066407218.1"/>
</dbReference>
<dbReference type="PDB" id="1C7V">
    <property type="method" value="NMR"/>
    <property type="chains" value="A=82-162"/>
</dbReference>
<dbReference type="PDB" id="1C7W">
    <property type="method" value="NMR"/>
    <property type="chains" value="A=82-162"/>
</dbReference>
<dbReference type="PDB" id="1J7Q">
    <property type="method" value="NMR"/>
    <property type="chains" value="A=2-87"/>
</dbReference>
<dbReference type="PDB" id="1J7R">
    <property type="method" value="NMR"/>
    <property type="chains" value="A=2-87"/>
</dbReference>
<dbReference type="PDBsum" id="1C7V"/>
<dbReference type="PDBsum" id="1C7W"/>
<dbReference type="PDBsum" id="1J7Q"/>
<dbReference type="PDBsum" id="1J7R"/>
<dbReference type="BMRB" id="P04573"/>
<dbReference type="SMR" id="P04573"/>
<dbReference type="iPTMnet" id="P04573"/>
<dbReference type="EnsemblMetazoa" id="BL01156_evm4">
    <property type="protein sequence ID" value="BL01156_evm4"/>
    <property type="gene ID" value="BL01156"/>
</dbReference>
<dbReference type="GeneID" id="136420357"/>
<dbReference type="OrthoDB" id="26525at2759"/>
<dbReference type="EvolutionaryTrace" id="P04573"/>
<dbReference type="Bgee" id="BL01156">
    <property type="expression patterns" value="Expressed in muscle tissue and 9 other cell types or tissues"/>
</dbReference>
<dbReference type="GO" id="GO:0005737">
    <property type="term" value="C:cytoplasm"/>
    <property type="evidence" value="ECO:0007669"/>
    <property type="project" value="UniProtKB-SubCell"/>
</dbReference>
<dbReference type="GO" id="GO:0016460">
    <property type="term" value="C:myosin II complex"/>
    <property type="evidence" value="ECO:0007669"/>
    <property type="project" value="TreeGrafter"/>
</dbReference>
<dbReference type="GO" id="GO:0005509">
    <property type="term" value="F:calcium ion binding"/>
    <property type="evidence" value="ECO:0007669"/>
    <property type="project" value="InterPro"/>
</dbReference>
<dbReference type="CDD" id="cd00051">
    <property type="entry name" value="EFh"/>
    <property type="match status" value="1"/>
</dbReference>
<dbReference type="FunFam" id="1.10.238.10:FF:000001">
    <property type="entry name" value="Calmodulin 1"/>
    <property type="match status" value="1"/>
</dbReference>
<dbReference type="Gene3D" id="1.10.238.10">
    <property type="entry name" value="EF-hand"/>
    <property type="match status" value="2"/>
</dbReference>
<dbReference type="InterPro" id="IPR050230">
    <property type="entry name" value="CALM/Myosin/TropC-like"/>
</dbReference>
<dbReference type="InterPro" id="IPR011992">
    <property type="entry name" value="EF-hand-dom_pair"/>
</dbReference>
<dbReference type="InterPro" id="IPR018247">
    <property type="entry name" value="EF_Hand_1_Ca_BS"/>
</dbReference>
<dbReference type="InterPro" id="IPR002048">
    <property type="entry name" value="EF_hand_dom"/>
</dbReference>
<dbReference type="PANTHER" id="PTHR23048:SF0">
    <property type="entry name" value="CALMODULIN LIKE 3"/>
    <property type="match status" value="1"/>
</dbReference>
<dbReference type="PANTHER" id="PTHR23048">
    <property type="entry name" value="MYOSIN LIGHT CHAIN 1, 3"/>
    <property type="match status" value="1"/>
</dbReference>
<dbReference type="Pfam" id="PF13499">
    <property type="entry name" value="EF-hand_7"/>
    <property type="match status" value="1"/>
</dbReference>
<dbReference type="PRINTS" id="PR00450">
    <property type="entry name" value="RECOVERIN"/>
</dbReference>
<dbReference type="SMART" id="SM00054">
    <property type="entry name" value="EFh"/>
    <property type="match status" value="2"/>
</dbReference>
<dbReference type="SUPFAM" id="SSF47473">
    <property type="entry name" value="EF-hand"/>
    <property type="match status" value="1"/>
</dbReference>
<dbReference type="PROSITE" id="PS00018">
    <property type="entry name" value="EF_HAND_1"/>
    <property type="match status" value="2"/>
</dbReference>
<dbReference type="PROSITE" id="PS50222">
    <property type="entry name" value="EF_HAND_2"/>
    <property type="match status" value="3"/>
</dbReference>
<sequence>MAAPKARALGPEEKDECMKIFDIFDRNAENIAPVSDTMDMLTKLGQTYTKRETEAIMKEARGPKGDKKNIGPEEWLTLCSKWVRQDDEEEILRAFKVFDANGDGVIDFDEFKFIMQKVGEEPLTDAEVEEAMKEADEDGNGVIDIPEFMDLIKKSKNALKES</sequence>
<feature type="initiator methionine" description="Removed" evidence="2">
    <location>
        <position position="1"/>
    </location>
</feature>
<feature type="chain" id="PRO_0000073578" description="Calcium vector protein">
    <location>
        <begin position="2"/>
        <end position="162"/>
    </location>
</feature>
<feature type="domain" description="EF-hand 1" evidence="1">
    <location>
        <begin position="12"/>
        <end position="47"/>
    </location>
</feature>
<feature type="domain" description="EF-hand 2" evidence="1">
    <location>
        <begin position="49"/>
        <end position="84"/>
    </location>
</feature>
<feature type="domain" description="EF-hand 3" evidence="1">
    <location>
        <begin position="86"/>
        <end position="121"/>
    </location>
</feature>
<feature type="domain" description="EF-hand 4" evidence="1">
    <location>
        <begin position="123"/>
        <end position="158"/>
    </location>
</feature>
<feature type="binding site" evidence="1">
    <location>
        <position position="99"/>
    </location>
    <ligand>
        <name>Ca(2+)</name>
        <dbReference type="ChEBI" id="CHEBI:29108"/>
        <label>1</label>
    </ligand>
</feature>
<feature type="binding site" evidence="1">
    <location>
        <position position="101"/>
    </location>
    <ligand>
        <name>Ca(2+)</name>
        <dbReference type="ChEBI" id="CHEBI:29108"/>
        <label>1</label>
    </ligand>
</feature>
<feature type="binding site" evidence="1">
    <location>
        <position position="103"/>
    </location>
    <ligand>
        <name>Ca(2+)</name>
        <dbReference type="ChEBI" id="CHEBI:29108"/>
        <label>1</label>
    </ligand>
</feature>
<feature type="binding site" evidence="1">
    <location>
        <position position="110"/>
    </location>
    <ligand>
        <name>Ca(2+)</name>
        <dbReference type="ChEBI" id="CHEBI:29108"/>
        <label>1</label>
    </ligand>
</feature>
<feature type="binding site" evidence="1">
    <location>
        <position position="136"/>
    </location>
    <ligand>
        <name>Ca(2+)</name>
        <dbReference type="ChEBI" id="CHEBI:29108"/>
        <label>2</label>
    </ligand>
</feature>
<feature type="binding site" evidence="1">
    <location>
        <position position="138"/>
    </location>
    <ligand>
        <name>Ca(2+)</name>
        <dbReference type="ChEBI" id="CHEBI:29108"/>
        <label>2</label>
    </ligand>
</feature>
<feature type="binding site" evidence="1">
    <location>
        <position position="140"/>
    </location>
    <ligand>
        <name>Ca(2+)</name>
        <dbReference type="ChEBI" id="CHEBI:29108"/>
        <label>2</label>
    </ligand>
</feature>
<feature type="binding site" evidence="1">
    <location>
        <position position="147"/>
    </location>
    <ligand>
        <name>Ca(2+)</name>
        <dbReference type="ChEBI" id="CHEBI:29108"/>
        <label>2</label>
    </ligand>
</feature>
<feature type="modified residue" description="N-acetylalanine" evidence="2">
    <location>
        <position position="2"/>
    </location>
</feature>
<feature type="modified residue" description="N6,N6,N6-trimethyllysine" evidence="2">
    <location>
        <position position="96"/>
    </location>
</feature>
<feature type="modified residue" description="N6,N6,N6-trimethyllysine" evidence="2">
    <location>
        <position position="117"/>
    </location>
</feature>
<feature type="helix" evidence="6">
    <location>
        <begin position="10"/>
        <end position="12"/>
    </location>
</feature>
<feature type="helix" evidence="5">
    <location>
        <begin position="13"/>
        <end position="24"/>
    </location>
</feature>
<feature type="turn" evidence="5">
    <location>
        <begin position="26"/>
        <end position="29"/>
    </location>
</feature>
<feature type="helix" evidence="5">
    <location>
        <begin position="34"/>
        <end position="43"/>
    </location>
</feature>
<feature type="helix" evidence="5">
    <location>
        <begin position="50"/>
        <end position="61"/>
    </location>
</feature>
<feature type="helix" evidence="5">
    <location>
        <begin position="74"/>
        <end position="83"/>
    </location>
</feature>
<feature type="helix" evidence="4">
    <location>
        <begin position="89"/>
        <end position="98"/>
    </location>
</feature>
<feature type="helix" evidence="4">
    <location>
        <begin position="102"/>
        <end position="104"/>
    </location>
</feature>
<feature type="helix" evidence="4">
    <location>
        <begin position="108"/>
        <end position="114"/>
    </location>
</feature>
<feature type="turn" evidence="4">
    <location>
        <begin position="117"/>
        <end position="120"/>
    </location>
</feature>
<feature type="helix" evidence="4">
    <location>
        <begin position="125"/>
        <end position="135"/>
    </location>
</feature>
<feature type="helix" evidence="4">
    <location>
        <begin position="139"/>
        <end position="141"/>
    </location>
</feature>
<feature type="strand" evidence="4">
    <location>
        <begin position="142"/>
        <end position="144"/>
    </location>
</feature>
<feature type="helix" evidence="4">
    <location>
        <begin position="145"/>
        <end position="153"/>
    </location>
</feature>
<accession>P04573</accession>
<accession>O01308</accession>